<accession>B0CS49</accession>
<evidence type="ECO:0000255" key="1">
    <source>
        <dbReference type="HAMAP-Rule" id="MF_03035"/>
    </source>
</evidence>
<evidence type="ECO:0000305" key="2"/>
<gene>
    <name evidence="1" type="primary">CLP1</name>
    <name type="ORF">LACBIDRAFT_305873</name>
</gene>
<sequence>MSETGSNEIKQWTLEPETEYRFELDPGTSLAIKLIQGNAEVFGAELAEGKHYLFGSECKAAVFTWQGCTIEMRHPSTEYVSEETPMAAYANLHIAFEQMRVRALAKFHGSPLPPGDEPPTAPEPPRVLVLGPENSGKTTVCKILTNYAVRAGQNWSPLLVNVDPSEGAWSAPGALSIAPVHGPIPTYSPANPLGSAATSAPMAMSSNALLPVVYWYGHPDTKRNPLLMDRLIRNLGENVNDRFELDQEGRSSGVIVDTPSSFASSSTSNDHRQKLIKACMDAFRINVILVVGHEKLNVEMQRAYSSYVTVVKIPKSGGVVELDHSYRERVHNYQLHTYMYGQVIQAPPGISNATLGGESLTDLVLSPSSSVIKFEDLSIFRIGAETMAPSSALPIGATRVVSEMQPVPVDPSQPGSGLLNAVLALLAPQNPDENERYDEEILDLTVSGFLIVTNLGMQQRKMTILAPNQGSVVGKTAIMGSFEWQEQ</sequence>
<reference key="1">
    <citation type="journal article" date="2008" name="Nature">
        <title>The genome of Laccaria bicolor provides insights into mycorrhizal symbiosis.</title>
        <authorList>
            <person name="Martin F."/>
            <person name="Aerts A."/>
            <person name="Ahren D."/>
            <person name="Brun A."/>
            <person name="Danchin E.G.J."/>
            <person name="Duchaussoy F."/>
            <person name="Gibon J."/>
            <person name="Kohler A."/>
            <person name="Lindquist E."/>
            <person name="Pereda V."/>
            <person name="Salamov A."/>
            <person name="Shapiro H.J."/>
            <person name="Wuyts J."/>
            <person name="Blaudez D."/>
            <person name="Buee M."/>
            <person name="Brokstein P."/>
            <person name="Canbaeck B."/>
            <person name="Cohen D."/>
            <person name="Courty P.E."/>
            <person name="Coutinho P.M."/>
            <person name="Delaruelle C."/>
            <person name="Detter J.C."/>
            <person name="Deveau A."/>
            <person name="DiFazio S."/>
            <person name="Duplessis S."/>
            <person name="Fraissinet-Tachet L."/>
            <person name="Lucic E."/>
            <person name="Frey-Klett P."/>
            <person name="Fourrey C."/>
            <person name="Feussner I."/>
            <person name="Gay G."/>
            <person name="Grimwood J."/>
            <person name="Hoegger P.J."/>
            <person name="Jain P."/>
            <person name="Kilaru S."/>
            <person name="Labbe J."/>
            <person name="Lin Y.C."/>
            <person name="Legue V."/>
            <person name="Le Tacon F."/>
            <person name="Marmeisse R."/>
            <person name="Melayah D."/>
            <person name="Montanini B."/>
            <person name="Muratet M."/>
            <person name="Nehls U."/>
            <person name="Niculita-Hirzel H."/>
            <person name="Oudot-Le Secq M.P."/>
            <person name="Peter M."/>
            <person name="Quesneville H."/>
            <person name="Rajashekar B."/>
            <person name="Reich M."/>
            <person name="Rouhier N."/>
            <person name="Schmutz J."/>
            <person name="Yin T."/>
            <person name="Chalot M."/>
            <person name="Henrissat B."/>
            <person name="Kuees U."/>
            <person name="Lucas S."/>
            <person name="Van de Peer Y."/>
            <person name="Podila G.K."/>
            <person name="Polle A."/>
            <person name="Pukkila P.J."/>
            <person name="Richardson P.M."/>
            <person name="Rouze P."/>
            <person name="Sanders I.R."/>
            <person name="Stajich J.E."/>
            <person name="Tunlid A."/>
            <person name="Tuskan G."/>
            <person name="Grigoriev I.V."/>
        </authorList>
    </citation>
    <scope>NUCLEOTIDE SEQUENCE [LARGE SCALE GENOMIC DNA]</scope>
    <source>
        <strain>S238N-H82 / ATCC MYA-4686</strain>
    </source>
</reference>
<dbReference type="EMBL" id="DS547092">
    <property type="protein sequence ID" value="EDR14238.1"/>
    <property type="molecule type" value="Genomic_DNA"/>
</dbReference>
<dbReference type="RefSeq" id="XP_001874797.1">
    <property type="nucleotide sequence ID" value="XM_001874762.1"/>
</dbReference>
<dbReference type="SMR" id="B0CS49"/>
<dbReference type="FunCoup" id="B0CS49">
    <property type="interactions" value="534"/>
</dbReference>
<dbReference type="STRING" id="486041.B0CS49"/>
<dbReference type="GeneID" id="6070118"/>
<dbReference type="KEGG" id="lbc:LACBIDRAFT_305873"/>
<dbReference type="HOGENOM" id="CLU_018195_3_1_1"/>
<dbReference type="InParanoid" id="B0CS49"/>
<dbReference type="OrthoDB" id="258143at2759"/>
<dbReference type="Proteomes" id="UP000001194">
    <property type="component" value="Unassembled WGS sequence"/>
</dbReference>
<dbReference type="GO" id="GO:0005849">
    <property type="term" value="C:mRNA cleavage factor complex"/>
    <property type="evidence" value="ECO:0007669"/>
    <property type="project" value="UniProtKB-UniRule"/>
</dbReference>
<dbReference type="GO" id="GO:0005524">
    <property type="term" value="F:ATP binding"/>
    <property type="evidence" value="ECO:0007669"/>
    <property type="project" value="UniProtKB-UniRule"/>
</dbReference>
<dbReference type="GO" id="GO:0051731">
    <property type="term" value="F:polynucleotide 5'-hydroxyl-kinase activity"/>
    <property type="evidence" value="ECO:0007669"/>
    <property type="project" value="InterPro"/>
</dbReference>
<dbReference type="GO" id="GO:0031124">
    <property type="term" value="P:mRNA 3'-end processing"/>
    <property type="evidence" value="ECO:0007669"/>
    <property type="project" value="UniProtKB-UniRule"/>
</dbReference>
<dbReference type="GO" id="GO:0006388">
    <property type="term" value="P:tRNA splicing, via endonucleolytic cleavage and ligation"/>
    <property type="evidence" value="ECO:0007669"/>
    <property type="project" value="TreeGrafter"/>
</dbReference>
<dbReference type="FunFam" id="2.60.120.1030:FF:000001">
    <property type="entry name" value="Protein CLP1 homolog 5"/>
    <property type="match status" value="1"/>
</dbReference>
<dbReference type="Gene3D" id="2.60.120.1030">
    <property type="entry name" value="Clp1, DNA binding domain"/>
    <property type="match status" value="1"/>
</dbReference>
<dbReference type="Gene3D" id="3.40.50.300">
    <property type="entry name" value="P-loop containing nucleotide triphosphate hydrolases"/>
    <property type="match status" value="1"/>
</dbReference>
<dbReference type="Gene3D" id="2.40.30.330">
    <property type="entry name" value="Pre-mRNA cleavage complex subunit Clp1, C-terminal domain"/>
    <property type="match status" value="1"/>
</dbReference>
<dbReference type="HAMAP" id="MF_03035">
    <property type="entry name" value="Clp1"/>
    <property type="match status" value="1"/>
</dbReference>
<dbReference type="InterPro" id="IPR028606">
    <property type="entry name" value="Clp1"/>
</dbReference>
<dbReference type="InterPro" id="IPR045116">
    <property type="entry name" value="Clp1/Grc3"/>
</dbReference>
<dbReference type="InterPro" id="IPR010655">
    <property type="entry name" value="Clp1_C"/>
</dbReference>
<dbReference type="InterPro" id="IPR038238">
    <property type="entry name" value="Clp1_C_sf"/>
</dbReference>
<dbReference type="InterPro" id="IPR032324">
    <property type="entry name" value="Clp1_N"/>
</dbReference>
<dbReference type="InterPro" id="IPR038239">
    <property type="entry name" value="Clp1_N_sf"/>
</dbReference>
<dbReference type="InterPro" id="IPR032319">
    <property type="entry name" value="CLP1_P"/>
</dbReference>
<dbReference type="InterPro" id="IPR027417">
    <property type="entry name" value="P-loop_NTPase"/>
</dbReference>
<dbReference type="PANTHER" id="PTHR12755">
    <property type="entry name" value="CLEAVAGE/POLYADENYLATION FACTOR IA SUBUNIT CLP1P"/>
    <property type="match status" value="1"/>
</dbReference>
<dbReference type="PANTHER" id="PTHR12755:SF6">
    <property type="entry name" value="POLYRIBONUCLEOTIDE 5'-HYDROXYL-KINASE CLP1"/>
    <property type="match status" value="1"/>
</dbReference>
<dbReference type="Pfam" id="PF06807">
    <property type="entry name" value="Clp1"/>
    <property type="match status" value="1"/>
</dbReference>
<dbReference type="Pfam" id="PF16573">
    <property type="entry name" value="CLP1_N"/>
    <property type="match status" value="1"/>
</dbReference>
<dbReference type="Pfam" id="PF16575">
    <property type="entry name" value="CLP1_P"/>
    <property type="match status" value="1"/>
</dbReference>
<dbReference type="SUPFAM" id="SSF52540">
    <property type="entry name" value="P-loop containing nucleoside triphosphate hydrolases"/>
    <property type="match status" value="1"/>
</dbReference>
<protein>
    <recommendedName>
        <fullName evidence="1">mRNA cleavage and polyadenylation factor CLP1</fullName>
    </recommendedName>
</protein>
<name>CLP1_LACBS</name>
<keyword id="KW-0067">ATP-binding</keyword>
<keyword id="KW-0507">mRNA processing</keyword>
<keyword id="KW-0547">Nucleotide-binding</keyword>
<keyword id="KW-0539">Nucleus</keyword>
<keyword id="KW-1185">Reference proteome</keyword>
<comment type="function">
    <text evidence="1">Required for endonucleolytic cleavage during polyadenylation-dependent pre-mRNA 3'-end formation.</text>
</comment>
<comment type="subunit">
    <text evidence="1">Component of a pre-mRNA cleavage factor complex. Interacts directly with PCF11.</text>
</comment>
<comment type="subcellular location">
    <subcellularLocation>
        <location evidence="1">Nucleus</location>
    </subcellularLocation>
</comment>
<comment type="similarity">
    <text evidence="1">Belongs to the Clp1 family. Clp1 subfamily.</text>
</comment>
<comment type="caution">
    <text evidence="2">May lack the polyribonucleotide 5'-hydroxyl-kinase and polynucleotide 5'-hydroxyl-kinase activities that are characteristic of the human ortholog.</text>
</comment>
<organism>
    <name type="scientific">Laccaria bicolor (strain S238N-H82 / ATCC MYA-4686)</name>
    <name type="common">Bicoloured deceiver</name>
    <name type="synonym">Laccaria laccata var. bicolor</name>
    <dbReference type="NCBI Taxonomy" id="486041"/>
    <lineage>
        <taxon>Eukaryota</taxon>
        <taxon>Fungi</taxon>
        <taxon>Dikarya</taxon>
        <taxon>Basidiomycota</taxon>
        <taxon>Agaricomycotina</taxon>
        <taxon>Agaricomycetes</taxon>
        <taxon>Agaricomycetidae</taxon>
        <taxon>Agaricales</taxon>
        <taxon>Agaricineae</taxon>
        <taxon>Hydnangiaceae</taxon>
        <taxon>Laccaria</taxon>
    </lineage>
</organism>
<feature type="chain" id="PRO_0000375207" description="mRNA cleavage and polyadenylation factor CLP1">
    <location>
        <begin position="1"/>
        <end position="487"/>
    </location>
</feature>
<feature type="binding site" evidence="1">
    <location>
        <position position="19"/>
    </location>
    <ligand>
        <name>ATP</name>
        <dbReference type="ChEBI" id="CHEBI:30616"/>
    </ligand>
</feature>
<feature type="binding site" evidence="1">
    <location>
        <position position="59"/>
    </location>
    <ligand>
        <name>ATP</name>
        <dbReference type="ChEBI" id="CHEBI:30616"/>
    </ligand>
</feature>
<feature type="binding site" evidence="1">
    <location>
        <begin position="134"/>
        <end position="139"/>
    </location>
    <ligand>
        <name>ATP</name>
        <dbReference type="ChEBI" id="CHEBI:30616"/>
    </ligand>
</feature>
<proteinExistence type="inferred from homology"/>